<name>BGLL_ASPFU</name>
<protein>
    <recommendedName>
        <fullName>Probable beta-glucosidase L</fullName>
        <ecNumber>3.2.1.21</ecNumber>
    </recommendedName>
    <alternativeName>
        <fullName>Beta-D-glucoside glucohydrolase L</fullName>
    </alternativeName>
    <alternativeName>
        <fullName>Cellobiase L</fullName>
    </alternativeName>
    <alternativeName>
        <fullName>Gentiobiase L</fullName>
    </alternativeName>
</protein>
<comment type="function">
    <text evidence="1">Beta-glucosidases are one of a number of cellulolytic enzymes involved in the degradation of cellulosic biomass. Catalyzes the last step releasing glucose from the inhibitory cellobiose (By similarity).</text>
</comment>
<comment type="catalytic activity">
    <reaction>
        <text>Hydrolysis of terminal, non-reducing beta-D-glucosyl residues with release of beta-D-glucose.</text>
        <dbReference type="EC" id="3.2.1.21"/>
    </reaction>
</comment>
<comment type="pathway">
    <text>Glycan metabolism; cellulose degradation.</text>
</comment>
<comment type="subcellular location">
    <subcellularLocation>
        <location evidence="1">Secreted</location>
    </subcellularLocation>
</comment>
<comment type="similarity">
    <text evidence="3">Belongs to the glycosyl hydrolase 3 family.</text>
</comment>
<reference key="1">
    <citation type="journal article" date="2005" name="Nature">
        <title>Genomic sequence of the pathogenic and allergenic filamentous fungus Aspergillus fumigatus.</title>
        <authorList>
            <person name="Nierman W.C."/>
            <person name="Pain A."/>
            <person name="Anderson M.J."/>
            <person name="Wortman J.R."/>
            <person name="Kim H.S."/>
            <person name="Arroyo J."/>
            <person name="Berriman M."/>
            <person name="Abe K."/>
            <person name="Archer D.B."/>
            <person name="Bermejo C."/>
            <person name="Bennett J.W."/>
            <person name="Bowyer P."/>
            <person name="Chen D."/>
            <person name="Collins M."/>
            <person name="Coulsen R."/>
            <person name="Davies R."/>
            <person name="Dyer P.S."/>
            <person name="Farman M.L."/>
            <person name="Fedorova N."/>
            <person name="Fedorova N.D."/>
            <person name="Feldblyum T.V."/>
            <person name="Fischer R."/>
            <person name="Fosker N."/>
            <person name="Fraser A."/>
            <person name="Garcia J.L."/>
            <person name="Garcia M.J."/>
            <person name="Goble A."/>
            <person name="Goldman G.H."/>
            <person name="Gomi K."/>
            <person name="Griffith-Jones S."/>
            <person name="Gwilliam R."/>
            <person name="Haas B.J."/>
            <person name="Haas H."/>
            <person name="Harris D.E."/>
            <person name="Horiuchi H."/>
            <person name="Huang J."/>
            <person name="Humphray S."/>
            <person name="Jimenez J."/>
            <person name="Keller N."/>
            <person name="Khouri H."/>
            <person name="Kitamoto K."/>
            <person name="Kobayashi T."/>
            <person name="Konzack S."/>
            <person name="Kulkarni R."/>
            <person name="Kumagai T."/>
            <person name="Lafton A."/>
            <person name="Latge J.-P."/>
            <person name="Li W."/>
            <person name="Lord A."/>
            <person name="Lu C."/>
            <person name="Majoros W.H."/>
            <person name="May G.S."/>
            <person name="Miller B.L."/>
            <person name="Mohamoud Y."/>
            <person name="Molina M."/>
            <person name="Monod M."/>
            <person name="Mouyna I."/>
            <person name="Mulligan S."/>
            <person name="Murphy L.D."/>
            <person name="O'Neil S."/>
            <person name="Paulsen I."/>
            <person name="Penalva M.A."/>
            <person name="Pertea M."/>
            <person name="Price C."/>
            <person name="Pritchard B.L."/>
            <person name="Quail M.A."/>
            <person name="Rabbinowitsch E."/>
            <person name="Rawlins N."/>
            <person name="Rajandream M.A."/>
            <person name="Reichard U."/>
            <person name="Renauld H."/>
            <person name="Robson G.D."/>
            <person name="Rodriguez de Cordoba S."/>
            <person name="Rodriguez-Pena J.M."/>
            <person name="Ronning C.M."/>
            <person name="Rutter S."/>
            <person name="Salzberg S.L."/>
            <person name="Sanchez M."/>
            <person name="Sanchez-Ferrero J.C."/>
            <person name="Saunders D."/>
            <person name="Seeger K."/>
            <person name="Squares R."/>
            <person name="Squares S."/>
            <person name="Takeuchi M."/>
            <person name="Tekaia F."/>
            <person name="Turner G."/>
            <person name="Vazquez de Aldana C.R."/>
            <person name="Weidman J."/>
            <person name="White O."/>
            <person name="Woodward J.R."/>
            <person name="Yu J.-H."/>
            <person name="Fraser C.M."/>
            <person name="Galagan J.E."/>
            <person name="Asai K."/>
            <person name="Machida M."/>
            <person name="Hall N."/>
            <person name="Barrell B.G."/>
            <person name="Denning D.W."/>
        </authorList>
    </citation>
    <scope>NUCLEOTIDE SEQUENCE [LARGE SCALE GENOMIC DNA]</scope>
    <source>
        <strain>ATCC MYA-4609 / CBS 101355 / FGSC A1100 / Af293</strain>
    </source>
</reference>
<gene>
    <name type="primary">bglL</name>
    <name type="ORF">AFUA_7G06140</name>
</gene>
<keyword id="KW-0119">Carbohydrate metabolism</keyword>
<keyword id="KW-0136">Cellulose degradation</keyword>
<keyword id="KW-0325">Glycoprotein</keyword>
<keyword id="KW-0326">Glycosidase</keyword>
<keyword id="KW-0378">Hydrolase</keyword>
<keyword id="KW-0624">Polysaccharide degradation</keyword>
<keyword id="KW-1185">Reference proteome</keyword>
<keyword id="KW-0964">Secreted</keyword>
<keyword id="KW-0732">Signal</keyword>
<feature type="signal peptide" evidence="2">
    <location>
        <begin position="1"/>
        <end position="17"/>
    </location>
</feature>
<feature type="chain" id="PRO_0000394900" description="Probable beta-glucosidase L">
    <location>
        <begin position="18"/>
        <end position="739"/>
    </location>
</feature>
<feature type="active site" evidence="1">
    <location>
        <position position="252"/>
    </location>
</feature>
<feature type="glycosylation site" description="N-linked (GlcNAc...) asparagine" evidence="2">
    <location>
        <position position="40"/>
    </location>
</feature>
<feature type="glycosylation site" description="N-linked (GlcNAc...) asparagine" evidence="2">
    <location>
        <position position="224"/>
    </location>
</feature>
<feature type="glycosylation site" description="N-linked (GlcNAc...) asparagine" evidence="2">
    <location>
        <position position="398"/>
    </location>
</feature>
<evidence type="ECO:0000250" key="1"/>
<evidence type="ECO:0000255" key="2"/>
<evidence type="ECO:0000305" key="3"/>
<organism>
    <name type="scientific">Aspergillus fumigatus (strain ATCC MYA-4609 / CBS 101355 / FGSC A1100 / Af293)</name>
    <name type="common">Neosartorya fumigata</name>
    <dbReference type="NCBI Taxonomy" id="330879"/>
    <lineage>
        <taxon>Eukaryota</taxon>
        <taxon>Fungi</taxon>
        <taxon>Dikarya</taxon>
        <taxon>Ascomycota</taxon>
        <taxon>Pezizomycotina</taxon>
        <taxon>Eurotiomycetes</taxon>
        <taxon>Eurotiomycetidae</taxon>
        <taxon>Eurotiales</taxon>
        <taxon>Aspergillaceae</taxon>
        <taxon>Aspergillus</taxon>
        <taxon>Aspergillus subgen. Fumigati</taxon>
    </lineage>
</organism>
<accession>Q4WGT3</accession>
<proteinExistence type="inferred from homology"/>
<sequence length="739" mass="78381">MQTLFLSLLAAAVTVHAYGSGGSNWDQAYSRAKDALQKLNQTEKVGLVTGVKWMGGPCVGNTYKPESIDYPSLCLQDSPLGIRFANPVTAFPAGINAGATWDTQLLYARGAAMGAEAKGLGIHVQLGPVAGPLGKNPNGGRNWEGFSVDPYLSGVAMEKTIRGMQDSGVQACAKHWLGNEQEHYRDTISSNIGDRAAHELYVWPFMDAVKAGVASVMCSYNKVNGTWACESDALNNKLMKEELGFPGYIMSDWNAQHSTVNSAVSGLDMTMPGSDFSNPPGSIFWGSNLEAAVADGSVPQSRLDDMVTRILAAWYLVGQDQGYPPVAFSSWNGGKANVDVTADHGTVARAVARDSIVLLKNGHGTLPLRKPKSLAIVGSDAIVNPAGPNACSDRGCNNGTLAMGWGSGTAEFPYLVGPLDAIQKRAAADGTKIVPSATDDPTAGASAAAAAETAIVFINSDSGEGYITVEGNLGDRNNLDPWHNGNELVKAVAAASKNVIVVIHSVGPIILETILAQPSVKAIVWAGLPGQESGNALVDVIYGDTTPSGKLPYTIAKQAADYGASWINAETDDFPEGLYVDYRHFDAKGIAPRYEFGYGLSYTTFKYSGLWVNMDASAGAANGQVVPGGPADLFEVVGQVSVSVRNNGRVAGAEVAQLYLGLPDSAPATPPKQLRGFQKLMLQPGQTGRATFKLTRRDLSYWDVQQQKWVVPSGTFKVYVGSSSRDIREEGSFRVRRGW</sequence>
<dbReference type="EC" id="3.2.1.21"/>
<dbReference type="EMBL" id="AAHF01000009">
    <property type="protein sequence ID" value="EAL86858.1"/>
    <property type="molecule type" value="Genomic_DNA"/>
</dbReference>
<dbReference type="RefSeq" id="XP_748896.1">
    <property type="nucleotide sequence ID" value="XM_743803.1"/>
</dbReference>
<dbReference type="SMR" id="Q4WGT3"/>
<dbReference type="STRING" id="330879.Q4WGT3"/>
<dbReference type="GlyCosmos" id="Q4WGT3">
    <property type="glycosylation" value="3 sites, No reported glycans"/>
</dbReference>
<dbReference type="EnsemblFungi" id="EAL86858">
    <property type="protein sequence ID" value="EAL86858"/>
    <property type="gene ID" value="AFUA_7G06140"/>
</dbReference>
<dbReference type="GeneID" id="3506305"/>
<dbReference type="KEGG" id="afm:AFUA_7G06140"/>
<dbReference type="VEuPathDB" id="FungiDB:Afu7g06140"/>
<dbReference type="eggNOG" id="ENOG502QR4D">
    <property type="taxonomic scope" value="Eukaryota"/>
</dbReference>
<dbReference type="HOGENOM" id="CLU_004542_2_3_1"/>
<dbReference type="InParanoid" id="Q4WGT3"/>
<dbReference type="OMA" id="MYGWDAY"/>
<dbReference type="OrthoDB" id="416222at2759"/>
<dbReference type="UniPathway" id="UPA00696"/>
<dbReference type="Proteomes" id="UP000002530">
    <property type="component" value="Chromosome 7"/>
</dbReference>
<dbReference type="GO" id="GO:0005576">
    <property type="term" value="C:extracellular region"/>
    <property type="evidence" value="ECO:0007669"/>
    <property type="project" value="UniProtKB-SubCell"/>
</dbReference>
<dbReference type="GO" id="GO:0008422">
    <property type="term" value="F:beta-glucosidase activity"/>
    <property type="evidence" value="ECO:0000318"/>
    <property type="project" value="GO_Central"/>
</dbReference>
<dbReference type="GO" id="GO:0030245">
    <property type="term" value="P:cellulose catabolic process"/>
    <property type="evidence" value="ECO:0007669"/>
    <property type="project" value="UniProtKB-UniPathway"/>
</dbReference>
<dbReference type="GO" id="GO:0009251">
    <property type="term" value="P:glucan catabolic process"/>
    <property type="evidence" value="ECO:0000318"/>
    <property type="project" value="GO_Central"/>
</dbReference>
<dbReference type="FunFam" id="2.60.40.10:FF:000757">
    <property type="entry name" value="Beta-glucosidase G"/>
    <property type="match status" value="1"/>
</dbReference>
<dbReference type="FunFam" id="3.20.20.300:FF:000002">
    <property type="entry name" value="Probable beta-glucosidase"/>
    <property type="match status" value="1"/>
</dbReference>
<dbReference type="FunFam" id="3.40.50.1700:FF:000003">
    <property type="entry name" value="Probable beta-glucosidase"/>
    <property type="match status" value="1"/>
</dbReference>
<dbReference type="Gene3D" id="3.40.50.1700">
    <property type="entry name" value="Glycoside hydrolase family 3 C-terminal domain"/>
    <property type="match status" value="1"/>
</dbReference>
<dbReference type="Gene3D" id="3.20.20.300">
    <property type="entry name" value="Glycoside hydrolase, family 3, N-terminal domain"/>
    <property type="match status" value="1"/>
</dbReference>
<dbReference type="Gene3D" id="2.60.40.10">
    <property type="entry name" value="Immunoglobulins"/>
    <property type="match status" value="1"/>
</dbReference>
<dbReference type="InterPro" id="IPR050288">
    <property type="entry name" value="Cellulose_deg_GH3"/>
</dbReference>
<dbReference type="InterPro" id="IPR026891">
    <property type="entry name" value="Fn3-like"/>
</dbReference>
<dbReference type="InterPro" id="IPR002772">
    <property type="entry name" value="Glyco_hydro_3_C"/>
</dbReference>
<dbReference type="InterPro" id="IPR036881">
    <property type="entry name" value="Glyco_hydro_3_C_sf"/>
</dbReference>
<dbReference type="InterPro" id="IPR001764">
    <property type="entry name" value="Glyco_hydro_3_N"/>
</dbReference>
<dbReference type="InterPro" id="IPR036962">
    <property type="entry name" value="Glyco_hydro_3_N_sf"/>
</dbReference>
<dbReference type="InterPro" id="IPR017853">
    <property type="entry name" value="Glycoside_hydrolase_SF"/>
</dbReference>
<dbReference type="InterPro" id="IPR013783">
    <property type="entry name" value="Ig-like_fold"/>
</dbReference>
<dbReference type="PANTHER" id="PTHR42715">
    <property type="entry name" value="BETA-GLUCOSIDASE"/>
    <property type="match status" value="1"/>
</dbReference>
<dbReference type="PANTHER" id="PTHR42715:SF28">
    <property type="entry name" value="BETA-GLUCOSIDASE L-RELATED"/>
    <property type="match status" value="1"/>
</dbReference>
<dbReference type="Pfam" id="PF14310">
    <property type="entry name" value="Fn3-like"/>
    <property type="match status" value="1"/>
</dbReference>
<dbReference type="Pfam" id="PF00933">
    <property type="entry name" value="Glyco_hydro_3"/>
    <property type="match status" value="1"/>
</dbReference>
<dbReference type="Pfam" id="PF01915">
    <property type="entry name" value="Glyco_hydro_3_C"/>
    <property type="match status" value="1"/>
</dbReference>
<dbReference type="PRINTS" id="PR00133">
    <property type="entry name" value="GLHYDRLASE3"/>
</dbReference>
<dbReference type="SMART" id="SM01217">
    <property type="entry name" value="Fn3_like"/>
    <property type="match status" value="1"/>
</dbReference>
<dbReference type="SUPFAM" id="SSF51445">
    <property type="entry name" value="(Trans)glycosidases"/>
    <property type="match status" value="1"/>
</dbReference>
<dbReference type="SUPFAM" id="SSF52279">
    <property type="entry name" value="Beta-D-glucan exohydrolase, C-terminal domain"/>
    <property type="match status" value="1"/>
</dbReference>